<dbReference type="EC" id="3.1.1.-" evidence="2"/>
<dbReference type="EMBL" id="AE014297">
    <property type="protein sequence ID" value="ABW08680.1"/>
    <property type="molecule type" value="Genomic_DNA"/>
</dbReference>
<dbReference type="EMBL" id="AE014297">
    <property type="protein sequence ID" value="AAF55184.1"/>
    <property type="molecule type" value="Genomic_DNA"/>
</dbReference>
<dbReference type="EMBL" id="BT004895">
    <property type="protein sequence ID" value="AAO47873.1"/>
    <property type="molecule type" value="mRNA"/>
</dbReference>
<dbReference type="RefSeq" id="NP_001097801.1">
    <molecule id="A8JR14-1"/>
    <property type="nucleotide sequence ID" value="NM_001104331.2"/>
</dbReference>
<dbReference type="RefSeq" id="NP_650455.1">
    <molecule id="A8JR14-2"/>
    <property type="nucleotide sequence ID" value="NM_142198.3"/>
</dbReference>
<dbReference type="BioGRID" id="66935">
    <property type="interactions" value="10"/>
</dbReference>
<dbReference type="FunCoup" id="A8JR14">
    <property type="interactions" value="268"/>
</dbReference>
<dbReference type="IntAct" id="A8JR14">
    <property type="interactions" value="1"/>
</dbReference>
<dbReference type="STRING" id="7227.FBpp0111839"/>
<dbReference type="GlyGen" id="A8JR14">
    <property type="glycosylation" value="1 site"/>
</dbReference>
<dbReference type="PaxDb" id="7227-FBpp0111839"/>
<dbReference type="DNASU" id="41872"/>
<dbReference type="EnsemblMetazoa" id="FBtr0083113">
    <molecule id="A8JR14-2"/>
    <property type="protein sequence ID" value="FBpp0082567"/>
    <property type="gene ID" value="FBgn0026737"/>
</dbReference>
<dbReference type="EnsemblMetazoa" id="FBtr0112926">
    <molecule id="A8JR14-1"/>
    <property type="protein sequence ID" value="FBpp0111839"/>
    <property type="gene ID" value="FBgn0026737"/>
</dbReference>
<dbReference type="GeneID" id="41872"/>
<dbReference type="KEGG" id="dme:Dmel_CG6171"/>
<dbReference type="UCSC" id="CG6171-RA">
    <property type="organism name" value="d. melanogaster"/>
</dbReference>
<dbReference type="UCSC" id="CG6171-RB">
    <molecule id="A8JR14-1"/>
    <property type="organism name" value="d. melanogaster"/>
</dbReference>
<dbReference type="AGR" id="FB:FBgn0026737"/>
<dbReference type="FlyBase" id="FBgn0026737">
    <property type="gene designation" value="CG6171"/>
</dbReference>
<dbReference type="VEuPathDB" id="VectorBase:FBgn0026737"/>
<dbReference type="eggNOG" id="ENOG502R7QZ">
    <property type="taxonomic scope" value="Eukaryota"/>
</dbReference>
<dbReference type="GeneTree" id="ENSGT00390000010591"/>
<dbReference type="HOGENOM" id="CLU_079469_0_0_1"/>
<dbReference type="InParanoid" id="A8JR14"/>
<dbReference type="OMA" id="RMSHPPN"/>
<dbReference type="OrthoDB" id="10256774at2759"/>
<dbReference type="PhylomeDB" id="A8JR14"/>
<dbReference type="BioGRID-ORCS" id="41872">
    <property type="hits" value="0 hits in 1 CRISPR screen"/>
</dbReference>
<dbReference type="GenomeRNAi" id="41872"/>
<dbReference type="PRO" id="PR:A8JR14"/>
<dbReference type="Proteomes" id="UP000000803">
    <property type="component" value="Chromosome 3R"/>
</dbReference>
<dbReference type="Bgee" id="FBgn0026737">
    <property type="expression patterns" value="Expressed in adult dorsomedial neurosecretory cell (Drosophila) in brain and 89 other cell types or tissues"/>
</dbReference>
<dbReference type="GO" id="GO:0005634">
    <property type="term" value="C:nucleus"/>
    <property type="evidence" value="ECO:0000250"/>
    <property type="project" value="FlyBase"/>
</dbReference>
<dbReference type="GO" id="GO:0008408">
    <property type="term" value="F:3'-5' exonuclease activity"/>
    <property type="evidence" value="ECO:0000314"/>
    <property type="project" value="UniProtKB"/>
</dbReference>
<dbReference type="GO" id="GO:0052720">
    <property type="term" value="F:class II DNA-(apurinic or apyrimidinic site) endonuclease activity"/>
    <property type="evidence" value="ECO:0000314"/>
    <property type="project" value="FlyBase"/>
</dbReference>
<dbReference type="GO" id="GO:0008270">
    <property type="term" value="F:zinc ion binding"/>
    <property type="evidence" value="ECO:0007669"/>
    <property type="project" value="UniProtKB-KW"/>
</dbReference>
<dbReference type="GO" id="GO:0006302">
    <property type="term" value="P:double-strand break repair"/>
    <property type="evidence" value="ECO:0000250"/>
    <property type="project" value="FlyBase"/>
</dbReference>
<dbReference type="GO" id="GO:0000012">
    <property type="term" value="P:single strand break repair"/>
    <property type="evidence" value="ECO:0000250"/>
    <property type="project" value="FlyBase"/>
</dbReference>
<dbReference type="InterPro" id="IPR039253">
    <property type="entry name" value="APLF"/>
</dbReference>
<dbReference type="InterPro" id="IPR019406">
    <property type="entry name" value="APLF_PBZ"/>
</dbReference>
<dbReference type="PANTHER" id="PTHR21315:SF2">
    <property type="entry name" value="APRATAXIN AND PNK-LIKE FACTOR"/>
    <property type="match status" value="1"/>
</dbReference>
<dbReference type="PANTHER" id="PTHR21315">
    <property type="entry name" value="APRATAXIN AND PNK-LIKE FACTOR-RELATED"/>
    <property type="match status" value="1"/>
</dbReference>
<dbReference type="Pfam" id="PF10283">
    <property type="entry name" value="zf-CCHH"/>
    <property type="match status" value="2"/>
</dbReference>
<protein>
    <recommendedName>
        <fullName>Aprataxin and PNK-like factor</fullName>
        <ecNumber evidence="2">3.1.1.-</ecNumber>
    </recommendedName>
    <alternativeName>
        <fullName>Apurinic-apyrimidinic endonuclease APLF</fullName>
    </alternativeName>
</protein>
<keyword id="KW-0025">Alternative splicing</keyword>
<keyword id="KW-0378">Hydrolase</keyword>
<keyword id="KW-0479">Metal-binding</keyword>
<keyword id="KW-1185">Reference proteome</keyword>
<keyword id="KW-0677">Repeat</keyword>
<keyword id="KW-0862">Zinc</keyword>
<keyword id="KW-0863">Zinc-finger</keyword>
<gene>
    <name type="ORF">CG6171</name>
</gene>
<accession>A8JR14</accession>
<accession>Q9VF76</accession>
<evidence type="ECO:0000256" key="1">
    <source>
        <dbReference type="SAM" id="MobiDB-lite"/>
    </source>
</evidence>
<evidence type="ECO:0000269" key="2">
    <source>
    </source>
</evidence>
<evidence type="ECO:0000305" key="3"/>
<name>APLF_DROME</name>
<comment type="function">
    <text evidence="2">Displays apurinic-apyrimidinic (AP) endonuclease and 3'-5' exonuclease activities in vitro.</text>
</comment>
<comment type="alternative products">
    <event type="alternative splicing"/>
    <isoform>
        <id>A8JR14-1</id>
        <name>B</name>
        <sequence type="displayed"/>
    </isoform>
    <isoform>
        <id>A8JR14-2</id>
        <name>A</name>
        <sequence type="described" ref="VSP_038137 VSP_038138"/>
    </isoform>
</comment>
<comment type="similarity">
    <text evidence="3">Belongs to the APLF family.</text>
</comment>
<proteinExistence type="evidence at protein level"/>
<organism>
    <name type="scientific">Drosophila melanogaster</name>
    <name type="common">Fruit fly</name>
    <dbReference type="NCBI Taxonomy" id="7227"/>
    <lineage>
        <taxon>Eukaryota</taxon>
        <taxon>Metazoa</taxon>
        <taxon>Ecdysozoa</taxon>
        <taxon>Arthropoda</taxon>
        <taxon>Hexapoda</taxon>
        <taxon>Insecta</taxon>
        <taxon>Pterygota</taxon>
        <taxon>Neoptera</taxon>
        <taxon>Endopterygota</taxon>
        <taxon>Diptera</taxon>
        <taxon>Brachycera</taxon>
        <taxon>Muscomorpha</taxon>
        <taxon>Ephydroidea</taxon>
        <taxon>Drosophilidae</taxon>
        <taxon>Drosophila</taxon>
        <taxon>Sophophora</taxon>
    </lineage>
</organism>
<sequence>MSATDASTADSGAKRKSSEDITHNCNANFGAENGLRKRVKSEEPVASIKDETNPEVPMKIKAEPVENADEPTSTTPAIKIKAEPADNGNSPAAAMVKTEPTNSNAQDAADESTVSSSSIRTSCRFGIRCYRRNPAHRSAEAHPGDQDYRRPNFPAPPLGTPACPFGNACYRRNPVHFQDYSHPADFNSAQNIRNRLRQRRAQRQNDDDSGTDEEDEPFGGDNDRDADYRPGADINEDEDDELEFDSQPISGDDYD</sequence>
<feature type="chain" id="PRO_0000385300" description="Aprataxin and PNK-like factor">
    <location>
        <begin position="1"/>
        <end position="255"/>
    </location>
</feature>
<feature type="zinc finger region" description="PBZ-type 1">
    <location>
        <begin position="121"/>
        <end position="142"/>
    </location>
</feature>
<feature type="zinc finger region" description="PBZ-type 2">
    <location>
        <begin position="161"/>
        <end position="182"/>
    </location>
</feature>
<feature type="region of interest" description="Disordered" evidence="1">
    <location>
        <begin position="1"/>
        <end position="117"/>
    </location>
</feature>
<feature type="region of interest" description="Disordered" evidence="1">
    <location>
        <begin position="131"/>
        <end position="168"/>
    </location>
</feature>
<feature type="region of interest" description="Disordered" evidence="1">
    <location>
        <begin position="195"/>
        <end position="255"/>
    </location>
</feature>
<feature type="compositionally biased region" description="Low complexity" evidence="1">
    <location>
        <begin position="1"/>
        <end position="11"/>
    </location>
</feature>
<feature type="compositionally biased region" description="Basic and acidic residues" evidence="1">
    <location>
        <begin position="12"/>
        <end position="22"/>
    </location>
</feature>
<feature type="compositionally biased region" description="Basic and acidic residues" evidence="1">
    <location>
        <begin position="40"/>
        <end position="64"/>
    </location>
</feature>
<feature type="compositionally biased region" description="Basic and acidic residues" evidence="1">
    <location>
        <begin position="137"/>
        <end position="150"/>
    </location>
</feature>
<feature type="compositionally biased region" description="Acidic residues" evidence="1">
    <location>
        <begin position="207"/>
        <end position="218"/>
    </location>
</feature>
<feature type="compositionally biased region" description="Basic and acidic residues" evidence="1">
    <location>
        <begin position="221"/>
        <end position="230"/>
    </location>
</feature>
<feature type="compositionally biased region" description="Acidic residues" evidence="1">
    <location>
        <begin position="234"/>
        <end position="244"/>
    </location>
</feature>
<feature type="splice variant" id="VSP_038137" description="In isoform A." evidence="3">
    <original>FN</original>
    <variation>CK</variation>
    <location>
        <begin position="186"/>
        <end position="187"/>
    </location>
</feature>
<feature type="splice variant" id="VSP_038138" description="In isoform A." evidence="3">
    <location>
        <begin position="188"/>
        <end position="255"/>
    </location>
</feature>
<reference key="1">
    <citation type="journal article" date="2000" name="Science">
        <title>The genome sequence of Drosophila melanogaster.</title>
        <authorList>
            <person name="Adams M.D."/>
            <person name="Celniker S.E."/>
            <person name="Holt R.A."/>
            <person name="Evans C.A."/>
            <person name="Gocayne J.D."/>
            <person name="Amanatides P.G."/>
            <person name="Scherer S.E."/>
            <person name="Li P.W."/>
            <person name="Hoskins R.A."/>
            <person name="Galle R.F."/>
            <person name="George R.A."/>
            <person name="Lewis S.E."/>
            <person name="Richards S."/>
            <person name="Ashburner M."/>
            <person name="Henderson S.N."/>
            <person name="Sutton G.G."/>
            <person name="Wortman J.R."/>
            <person name="Yandell M.D."/>
            <person name="Zhang Q."/>
            <person name="Chen L.X."/>
            <person name="Brandon R.C."/>
            <person name="Rogers Y.-H.C."/>
            <person name="Blazej R.G."/>
            <person name="Champe M."/>
            <person name="Pfeiffer B.D."/>
            <person name="Wan K.H."/>
            <person name="Doyle C."/>
            <person name="Baxter E.G."/>
            <person name="Helt G."/>
            <person name="Nelson C.R."/>
            <person name="Miklos G.L.G."/>
            <person name="Abril J.F."/>
            <person name="Agbayani A."/>
            <person name="An H.-J."/>
            <person name="Andrews-Pfannkoch C."/>
            <person name="Baldwin D."/>
            <person name="Ballew R.M."/>
            <person name="Basu A."/>
            <person name="Baxendale J."/>
            <person name="Bayraktaroglu L."/>
            <person name="Beasley E.M."/>
            <person name="Beeson K.Y."/>
            <person name="Benos P.V."/>
            <person name="Berman B.P."/>
            <person name="Bhandari D."/>
            <person name="Bolshakov S."/>
            <person name="Borkova D."/>
            <person name="Botchan M.R."/>
            <person name="Bouck J."/>
            <person name="Brokstein P."/>
            <person name="Brottier P."/>
            <person name="Burtis K.C."/>
            <person name="Busam D.A."/>
            <person name="Butler H."/>
            <person name="Cadieu E."/>
            <person name="Center A."/>
            <person name="Chandra I."/>
            <person name="Cherry J.M."/>
            <person name="Cawley S."/>
            <person name="Dahlke C."/>
            <person name="Davenport L.B."/>
            <person name="Davies P."/>
            <person name="de Pablos B."/>
            <person name="Delcher A."/>
            <person name="Deng Z."/>
            <person name="Mays A.D."/>
            <person name="Dew I."/>
            <person name="Dietz S.M."/>
            <person name="Dodson K."/>
            <person name="Doup L.E."/>
            <person name="Downes M."/>
            <person name="Dugan-Rocha S."/>
            <person name="Dunkov B.C."/>
            <person name="Dunn P."/>
            <person name="Durbin K.J."/>
            <person name="Evangelista C.C."/>
            <person name="Ferraz C."/>
            <person name="Ferriera S."/>
            <person name="Fleischmann W."/>
            <person name="Fosler C."/>
            <person name="Gabrielian A.E."/>
            <person name="Garg N.S."/>
            <person name="Gelbart W.M."/>
            <person name="Glasser K."/>
            <person name="Glodek A."/>
            <person name="Gong F."/>
            <person name="Gorrell J.H."/>
            <person name="Gu Z."/>
            <person name="Guan P."/>
            <person name="Harris M."/>
            <person name="Harris N.L."/>
            <person name="Harvey D.A."/>
            <person name="Heiman T.J."/>
            <person name="Hernandez J.R."/>
            <person name="Houck J."/>
            <person name="Hostin D."/>
            <person name="Houston K.A."/>
            <person name="Howland T.J."/>
            <person name="Wei M.-H."/>
            <person name="Ibegwam C."/>
            <person name="Jalali M."/>
            <person name="Kalush F."/>
            <person name="Karpen G.H."/>
            <person name="Ke Z."/>
            <person name="Kennison J.A."/>
            <person name="Ketchum K.A."/>
            <person name="Kimmel B.E."/>
            <person name="Kodira C.D."/>
            <person name="Kraft C.L."/>
            <person name="Kravitz S."/>
            <person name="Kulp D."/>
            <person name="Lai Z."/>
            <person name="Lasko P."/>
            <person name="Lei Y."/>
            <person name="Levitsky A.A."/>
            <person name="Li J.H."/>
            <person name="Li Z."/>
            <person name="Liang Y."/>
            <person name="Lin X."/>
            <person name="Liu X."/>
            <person name="Mattei B."/>
            <person name="McIntosh T.C."/>
            <person name="McLeod M.P."/>
            <person name="McPherson D."/>
            <person name="Merkulov G."/>
            <person name="Milshina N.V."/>
            <person name="Mobarry C."/>
            <person name="Morris J."/>
            <person name="Moshrefi A."/>
            <person name="Mount S.M."/>
            <person name="Moy M."/>
            <person name="Murphy B."/>
            <person name="Murphy L."/>
            <person name="Muzny D.M."/>
            <person name="Nelson D.L."/>
            <person name="Nelson D.R."/>
            <person name="Nelson K.A."/>
            <person name="Nixon K."/>
            <person name="Nusskern D.R."/>
            <person name="Pacleb J.M."/>
            <person name="Palazzolo M."/>
            <person name="Pittman G.S."/>
            <person name="Pan S."/>
            <person name="Pollard J."/>
            <person name="Puri V."/>
            <person name="Reese M.G."/>
            <person name="Reinert K."/>
            <person name="Remington K."/>
            <person name="Saunders R.D.C."/>
            <person name="Scheeler F."/>
            <person name="Shen H."/>
            <person name="Shue B.C."/>
            <person name="Siden-Kiamos I."/>
            <person name="Simpson M."/>
            <person name="Skupski M.P."/>
            <person name="Smith T.J."/>
            <person name="Spier E."/>
            <person name="Spradling A.C."/>
            <person name="Stapleton M."/>
            <person name="Strong R."/>
            <person name="Sun E."/>
            <person name="Svirskas R."/>
            <person name="Tector C."/>
            <person name="Turner R."/>
            <person name="Venter E."/>
            <person name="Wang A.H."/>
            <person name="Wang X."/>
            <person name="Wang Z.-Y."/>
            <person name="Wassarman D.A."/>
            <person name="Weinstock G.M."/>
            <person name="Weissenbach J."/>
            <person name="Williams S.M."/>
            <person name="Woodage T."/>
            <person name="Worley K.C."/>
            <person name="Wu D."/>
            <person name="Yang S."/>
            <person name="Yao Q.A."/>
            <person name="Ye J."/>
            <person name="Yeh R.-F."/>
            <person name="Zaveri J.S."/>
            <person name="Zhan M."/>
            <person name="Zhang G."/>
            <person name="Zhao Q."/>
            <person name="Zheng L."/>
            <person name="Zheng X.H."/>
            <person name="Zhong F.N."/>
            <person name="Zhong W."/>
            <person name="Zhou X."/>
            <person name="Zhu S.C."/>
            <person name="Zhu X."/>
            <person name="Smith H.O."/>
            <person name="Gibbs R.A."/>
            <person name="Myers E.W."/>
            <person name="Rubin G.M."/>
            <person name="Venter J.C."/>
        </authorList>
    </citation>
    <scope>NUCLEOTIDE SEQUENCE [LARGE SCALE GENOMIC DNA]</scope>
    <source>
        <strain>Berkeley</strain>
    </source>
</reference>
<reference key="2">
    <citation type="journal article" date="2002" name="Genome Biol.">
        <title>Annotation of the Drosophila melanogaster euchromatic genome: a systematic review.</title>
        <authorList>
            <person name="Misra S."/>
            <person name="Crosby M.A."/>
            <person name="Mungall C.J."/>
            <person name="Matthews B.B."/>
            <person name="Campbell K.S."/>
            <person name="Hradecky P."/>
            <person name="Huang Y."/>
            <person name="Kaminker J.S."/>
            <person name="Millburn G.H."/>
            <person name="Prochnik S.E."/>
            <person name="Smith C.D."/>
            <person name="Tupy J.L."/>
            <person name="Whitfield E.J."/>
            <person name="Bayraktaroglu L."/>
            <person name="Berman B.P."/>
            <person name="Bettencourt B.R."/>
            <person name="Celniker S.E."/>
            <person name="de Grey A.D.N.J."/>
            <person name="Drysdale R.A."/>
            <person name="Harris N.L."/>
            <person name="Richter J."/>
            <person name="Russo S."/>
            <person name="Schroeder A.J."/>
            <person name="Shu S.Q."/>
            <person name="Stapleton M."/>
            <person name="Yamada C."/>
            <person name="Ashburner M."/>
            <person name="Gelbart W.M."/>
            <person name="Rubin G.M."/>
            <person name="Lewis S.E."/>
        </authorList>
    </citation>
    <scope>GENOME REANNOTATION</scope>
    <scope>ALTERNATIVE SPLICING</scope>
    <source>
        <strain>Berkeley</strain>
    </source>
</reference>
<reference key="3">
    <citation type="submission" date="2003-02" db="EMBL/GenBank/DDBJ databases">
        <authorList>
            <person name="Stapleton M."/>
            <person name="Brokstein P."/>
            <person name="Hong L."/>
            <person name="Agbayani A."/>
            <person name="Carlson J.W."/>
            <person name="Champe M."/>
            <person name="Chavez C."/>
            <person name="Dorsett V."/>
            <person name="Dresnek D."/>
            <person name="Farfan D."/>
            <person name="Frise E."/>
            <person name="George R.A."/>
            <person name="Gonzalez M."/>
            <person name="Guarin H."/>
            <person name="Kronmiller B."/>
            <person name="Li P.W."/>
            <person name="Liao G."/>
            <person name="Miranda A."/>
            <person name="Mungall C.J."/>
            <person name="Nunoo J."/>
            <person name="Pacleb J.M."/>
            <person name="Paragas V."/>
            <person name="Park S."/>
            <person name="Patel S."/>
            <person name="Phouanenavong S."/>
            <person name="Wan K.H."/>
            <person name="Yu C."/>
            <person name="Lewis S.E."/>
            <person name="Rubin G.M."/>
            <person name="Celniker S.E."/>
        </authorList>
    </citation>
    <scope>NUCLEOTIDE SEQUENCE [LARGE SCALE MRNA] (ISOFORM B)</scope>
    <source>
        <strain>Berkeley</strain>
        <tissue>Embryo</tissue>
    </source>
</reference>
<reference key="4">
    <citation type="journal article" date="2007" name="EMBO J.">
        <title>A novel human AP endonuclease with conserved zinc-finger-like motifs involved in DNA strand break responses.</title>
        <authorList>
            <person name="Kanno S."/>
            <person name="Kuzuoka H."/>
            <person name="Sasao S."/>
            <person name="Hong Z."/>
            <person name="Lan L."/>
            <person name="Nakajima S."/>
            <person name="Yasui A."/>
        </authorList>
    </citation>
    <scope>FUNCTION</scope>
    <scope>CATALYTIC ACTIVITY</scope>
</reference>